<comment type="function">
    <text evidence="1">Involved in allosteric regulation of aspartate carbamoyltransferase.</text>
</comment>
<comment type="cofactor">
    <cofactor evidence="1">
        <name>Zn(2+)</name>
        <dbReference type="ChEBI" id="CHEBI:29105"/>
    </cofactor>
    <text evidence="1">Binds 1 zinc ion per subunit.</text>
</comment>
<comment type="subunit">
    <text evidence="1">Heterododecamer (2C3:3R2) of six catalytic PyrB chains organized as two trimers (C3), and six regulatory PyrI chains organized as three dimers (R2).</text>
</comment>
<comment type="similarity">
    <text evidence="2">Belongs to the PyrI family.</text>
</comment>
<dbReference type="EMBL" id="AE014075">
    <property type="protein sequence ID" value="AAN83765.1"/>
    <property type="molecule type" value="Genomic_DNA"/>
</dbReference>
<dbReference type="RefSeq" id="WP_000148581.1">
    <property type="nucleotide sequence ID" value="NZ_CP051263.1"/>
</dbReference>
<dbReference type="SMR" id="P0A7F4"/>
<dbReference type="STRING" id="199310.c5344"/>
<dbReference type="GeneID" id="93777580"/>
<dbReference type="KEGG" id="ecc:c5344"/>
<dbReference type="eggNOG" id="COG1781">
    <property type="taxonomic scope" value="Bacteria"/>
</dbReference>
<dbReference type="HOGENOM" id="CLU_128576_0_0_6"/>
<dbReference type="BioCyc" id="ECOL199310:C5344-MONOMER"/>
<dbReference type="Proteomes" id="UP000001410">
    <property type="component" value="Chromosome"/>
</dbReference>
<dbReference type="GO" id="GO:0009347">
    <property type="term" value="C:aspartate carbamoyltransferase complex"/>
    <property type="evidence" value="ECO:0007669"/>
    <property type="project" value="InterPro"/>
</dbReference>
<dbReference type="GO" id="GO:0046872">
    <property type="term" value="F:metal ion binding"/>
    <property type="evidence" value="ECO:0007669"/>
    <property type="project" value="UniProtKB-KW"/>
</dbReference>
<dbReference type="GO" id="GO:0006207">
    <property type="term" value="P:'de novo' pyrimidine nucleobase biosynthetic process"/>
    <property type="evidence" value="ECO:0007669"/>
    <property type="project" value="InterPro"/>
</dbReference>
<dbReference type="GO" id="GO:0006221">
    <property type="term" value="P:pyrimidine nucleotide biosynthetic process"/>
    <property type="evidence" value="ECO:0007669"/>
    <property type="project" value="UniProtKB-UniRule"/>
</dbReference>
<dbReference type="FunFam" id="2.30.30.20:FF:000001">
    <property type="entry name" value="Aspartate carbamoyltransferase regulatory chain"/>
    <property type="match status" value="1"/>
</dbReference>
<dbReference type="FunFam" id="3.30.70.140:FF:000001">
    <property type="entry name" value="Aspartate carbamoyltransferase regulatory chain"/>
    <property type="match status" value="1"/>
</dbReference>
<dbReference type="Gene3D" id="2.30.30.20">
    <property type="entry name" value="Aspartate carbamoyltransferase regulatory subunit, C-terminal domain"/>
    <property type="match status" value="1"/>
</dbReference>
<dbReference type="Gene3D" id="3.30.70.140">
    <property type="entry name" value="Aspartate carbamoyltransferase regulatory subunit, N-terminal domain"/>
    <property type="match status" value="1"/>
</dbReference>
<dbReference type="HAMAP" id="MF_00002">
    <property type="entry name" value="Asp_carb_tr_reg"/>
    <property type="match status" value="1"/>
</dbReference>
<dbReference type="InterPro" id="IPR020545">
    <property type="entry name" value="Asp_carbamoyltransf_reg_N"/>
</dbReference>
<dbReference type="InterPro" id="IPR002801">
    <property type="entry name" value="Asp_carbamoylTrfase_reg"/>
</dbReference>
<dbReference type="InterPro" id="IPR020542">
    <property type="entry name" value="Asp_carbamoyltrfase_reg_C"/>
</dbReference>
<dbReference type="InterPro" id="IPR036792">
    <property type="entry name" value="Asp_carbatrfase_reg_C_sf"/>
</dbReference>
<dbReference type="InterPro" id="IPR036793">
    <property type="entry name" value="Asp_carbatrfase_reg_N_sf"/>
</dbReference>
<dbReference type="NCBIfam" id="TIGR00240">
    <property type="entry name" value="ATCase_reg"/>
    <property type="match status" value="1"/>
</dbReference>
<dbReference type="PANTHER" id="PTHR35805">
    <property type="entry name" value="ASPARTATE CARBAMOYLTRANSFERASE REGULATORY CHAIN"/>
    <property type="match status" value="1"/>
</dbReference>
<dbReference type="PANTHER" id="PTHR35805:SF1">
    <property type="entry name" value="ASPARTATE CARBAMOYLTRANSFERASE REGULATORY CHAIN"/>
    <property type="match status" value="1"/>
</dbReference>
<dbReference type="Pfam" id="PF01948">
    <property type="entry name" value="PyrI"/>
    <property type="match status" value="1"/>
</dbReference>
<dbReference type="Pfam" id="PF02748">
    <property type="entry name" value="PyrI_C"/>
    <property type="match status" value="1"/>
</dbReference>
<dbReference type="SUPFAM" id="SSF57825">
    <property type="entry name" value="Aspartate carbamoyltransferase, Regulatory-chain, C-terminal domain"/>
    <property type="match status" value="1"/>
</dbReference>
<dbReference type="SUPFAM" id="SSF54893">
    <property type="entry name" value="Aspartate carbamoyltransferase, Regulatory-chain, N-terminal domain"/>
    <property type="match status" value="1"/>
</dbReference>
<organism>
    <name type="scientific">Escherichia coli O6:H1 (strain CFT073 / ATCC 700928 / UPEC)</name>
    <dbReference type="NCBI Taxonomy" id="199310"/>
    <lineage>
        <taxon>Bacteria</taxon>
        <taxon>Pseudomonadati</taxon>
        <taxon>Pseudomonadota</taxon>
        <taxon>Gammaproteobacteria</taxon>
        <taxon>Enterobacterales</taxon>
        <taxon>Enterobacteriaceae</taxon>
        <taxon>Escherichia</taxon>
    </lineage>
</organism>
<accession>P0A7F4</accession>
<accession>P00478</accession>
<name>PYRI_ECOL6</name>
<sequence>MTHDNKLQVEAIKRGTVIDHIPAQIGFKLLSLFKLTETDQRITIGLNLPSGEMGRKDLIKIENTFLSEDQVDQLALYAPQATVNRIDNYEVVGKSRPSLPERIDNVLVCPNSNCISHAEPVSSSFAVRKRANDIALKCKYCEKEFSHNVVLAN</sequence>
<proteinExistence type="inferred from homology"/>
<keyword id="KW-0479">Metal-binding</keyword>
<keyword id="KW-0665">Pyrimidine biosynthesis</keyword>
<keyword id="KW-1185">Reference proteome</keyword>
<keyword id="KW-0862">Zinc</keyword>
<gene>
    <name type="primary">pyrI</name>
    <name type="ordered locus">c5344</name>
</gene>
<protein>
    <recommendedName>
        <fullName>Aspartate carbamoyltransferase regulatory chain</fullName>
    </recommendedName>
</protein>
<reference key="1">
    <citation type="journal article" date="2002" name="Proc. Natl. Acad. Sci. U.S.A.">
        <title>Extensive mosaic structure revealed by the complete genome sequence of uropathogenic Escherichia coli.</title>
        <authorList>
            <person name="Welch R.A."/>
            <person name="Burland V."/>
            <person name="Plunkett G. III"/>
            <person name="Redford P."/>
            <person name="Roesch P."/>
            <person name="Rasko D."/>
            <person name="Buckles E.L."/>
            <person name="Liou S.-R."/>
            <person name="Boutin A."/>
            <person name="Hackett J."/>
            <person name="Stroud D."/>
            <person name="Mayhew G.F."/>
            <person name="Rose D.J."/>
            <person name="Zhou S."/>
            <person name="Schwartz D.C."/>
            <person name="Perna N.T."/>
            <person name="Mobley H.L.T."/>
            <person name="Donnenberg M.S."/>
            <person name="Blattner F.R."/>
        </authorList>
    </citation>
    <scope>NUCLEOTIDE SEQUENCE [LARGE SCALE GENOMIC DNA]</scope>
    <source>
        <strain>CFT073 / ATCC 700928 / UPEC</strain>
    </source>
</reference>
<evidence type="ECO:0000250" key="1"/>
<evidence type="ECO:0000305" key="2"/>
<feature type="initiator methionine" description="Removed" evidence="1">
    <location>
        <position position="1"/>
    </location>
</feature>
<feature type="chain" id="PRO_0000142305" description="Aspartate carbamoyltransferase regulatory chain">
    <location>
        <begin position="2"/>
        <end position="153"/>
    </location>
</feature>
<feature type="binding site" evidence="1">
    <location>
        <position position="109"/>
    </location>
    <ligand>
        <name>Zn(2+)</name>
        <dbReference type="ChEBI" id="CHEBI:29105"/>
    </ligand>
</feature>
<feature type="binding site" evidence="1">
    <location>
        <position position="114"/>
    </location>
    <ligand>
        <name>Zn(2+)</name>
        <dbReference type="ChEBI" id="CHEBI:29105"/>
    </ligand>
</feature>
<feature type="binding site" evidence="1">
    <location>
        <position position="138"/>
    </location>
    <ligand>
        <name>Zn(2+)</name>
        <dbReference type="ChEBI" id="CHEBI:29105"/>
    </ligand>
</feature>
<feature type="binding site" evidence="1">
    <location>
        <position position="141"/>
    </location>
    <ligand>
        <name>Zn(2+)</name>
        <dbReference type="ChEBI" id="CHEBI:29105"/>
    </ligand>
</feature>